<proteinExistence type="evidence at protein level"/>
<organism>
    <name type="scientific">Ginkgo biloba</name>
    <name type="common">Ginkgo</name>
    <name type="synonym">Maidenhair tree</name>
    <dbReference type="NCBI Taxonomy" id="3311"/>
    <lineage>
        <taxon>Eukaryota</taxon>
        <taxon>Viridiplantae</taxon>
        <taxon>Streptophyta</taxon>
        <taxon>Embryophyta</taxon>
        <taxon>Tracheophyta</taxon>
        <taxon>Spermatophyta</taxon>
        <taxon>Ginkgoidae</taxon>
        <taxon>Ginkgoales</taxon>
        <taxon>Ginkgoaceae</taxon>
        <taxon>Ginkgo</taxon>
    </lineage>
</organism>
<protein>
    <recommendedName>
        <fullName>Unknown protein 8</fullName>
    </recommendedName>
</protein>
<accession>P85406</accession>
<sequence length="5" mass="498">PAVVL</sequence>
<name>UP08_GINBI</name>
<keyword id="KW-0903">Direct protein sequencing</keyword>
<feature type="chain" id="PRO_0000341521" description="Unknown protein 8">
    <location>
        <begin position="1" status="less than"/>
        <end position="5" status="greater than"/>
    </location>
</feature>
<feature type="unsure residue" description="L or I">
    <location>
        <position position="5"/>
    </location>
</feature>
<feature type="non-terminal residue">
    <location>
        <position position="1"/>
    </location>
</feature>
<feature type="non-terminal residue">
    <location>
        <position position="5"/>
    </location>
</feature>
<reference key="1">
    <citation type="journal article" date="2009" name="Physiol. Plantarum">
        <title>The presence of sinapyl lignin in Ginkgo biloba cell cultures changes our views of the evolution of lignin biosynthesis.</title>
        <authorList>
            <person name="Novo Uzal E."/>
            <person name="Gomez Ros L.V."/>
            <person name="Pomar F."/>
            <person name="Bernal M.A."/>
            <person name="Paradela A."/>
            <person name="Albar J.P."/>
            <person name="Ros Barcelo A."/>
        </authorList>
    </citation>
    <scope>PROTEIN SEQUENCE</scope>
    <source>
        <strain>PC-650</strain>
        <tissue>Callus</tissue>
    </source>
</reference>